<feature type="chain" id="PRO_0000409383" description="Cbp/p300-interacting transactivator 3">
    <location>
        <begin position="1"/>
        <end position="205"/>
    </location>
</feature>
<organism>
    <name type="scientific">Gallus gallus</name>
    <name type="common">Chicken</name>
    <dbReference type="NCBI Taxonomy" id="9031"/>
    <lineage>
        <taxon>Eukaryota</taxon>
        <taxon>Metazoa</taxon>
        <taxon>Chordata</taxon>
        <taxon>Craniata</taxon>
        <taxon>Vertebrata</taxon>
        <taxon>Euteleostomi</taxon>
        <taxon>Archelosauria</taxon>
        <taxon>Archosauria</taxon>
        <taxon>Dinosauria</taxon>
        <taxon>Saurischia</taxon>
        <taxon>Theropoda</taxon>
        <taxon>Coelurosauria</taxon>
        <taxon>Aves</taxon>
        <taxon>Neognathae</taxon>
        <taxon>Galloanserae</taxon>
        <taxon>Galliformes</taxon>
        <taxon>Phasianidae</taxon>
        <taxon>Phasianinae</taxon>
        <taxon>Gallus</taxon>
    </lineage>
</organism>
<reference key="1">
    <citation type="journal article" date="2000" name="Mech. Dev.">
        <title>Isolation and expression of a novel member of the CITED family.</title>
        <authorList>
            <person name="Andrews J.E."/>
            <person name="O'Neill M.J."/>
            <person name="Binder M."/>
            <person name="Shioda T."/>
            <person name="Sinclair A.H."/>
        </authorList>
    </citation>
    <scope>NUCLEOTIDE SEQUENCE [MRNA]</scope>
    <scope>DEVELOPMENTAL STAGE</scope>
    <source>
        <tissue>Urogenital system</tissue>
    </source>
</reference>
<reference key="2">
    <citation type="journal article" date="2001" name="Genes Dev.">
        <title>Selective coactivation of estrogen-dependent transcription by CITED1 CBP/p300-binding protein.</title>
        <authorList>
            <person name="Yahata T."/>
            <person name="Shao W."/>
            <person name="Endoh H."/>
            <person name="Hur J."/>
            <person name="Coser K.R."/>
            <person name="Sun H."/>
            <person name="Ueda Y."/>
            <person name="Kato S."/>
            <person name="Isselbacher K.J."/>
            <person name="Brown M."/>
            <person name="Shioda T."/>
        </authorList>
    </citation>
    <scope>FUNCTION</scope>
</reference>
<dbReference type="EMBL" id="AF261079">
    <property type="protein sequence ID" value="AAF76148.1"/>
    <property type="molecule type" value="mRNA"/>
</dbReference>
<dbReference type="RefSeq" id="NP_990049.1">
    <property type="nucleotide sequence ID" value="NM_204718.2"/>
</dbReference>
<dbReference type="SMR" id="Q9I8K7"/>
<dbReference type="STRING" id="9031.ENSGALP00000069549"/>
<dbReference type="PaxDb" id="9031-ENSGALP00000000958"/>
<dbReference type="Ensembl" id="ENSGALT00010031764.1">
    <property type="protein sequence ID" value="ENSGALP00010018591.1"/>
    <property type="gene ID" value="ENSGALG00010013227.1"/>
</dbReference>
<dbReference type="GeneID" id="395465"/>
<dbReference type="KEGG" id="gga:395465"/>
<dbReference type="CTD" id="163732"/>
<dbReference type="VEuPathDB" id="HostDB:geneid_395465"/>
<dbReference type="eggNOG" id="ENOG502RY5J">
    <property type="taxonomic scope" value="Eukaryota"/>
</dbReference>
<dbReference type="GeneTree" id="ENSGT00530000063624"/>
<dbReference type="HOGENOM" id="CLU_090678_0_0_1"/>
<dbReference type="InParanoid" id="Q9I8K7"/>
<dbReference type="OMA" id="NPQSNME"/>
<dbReference type="OrthoDB" id="8939897at2759"/>
<dbReference type="PhylomeDB" id="Q9I8K7"/>
<dbReference type="TreeFam" id="TF331915"/>
<dbReference type="Reactome" id="R-GGA-8866907">
    <property type="pathway name" value="Activation of the TFAP2 (AP-2) family of transcription factors"/>
</dbReference>
<dbReference type="PRO" id="PR:Q9I8K7"/>
<dbReference type="Proteomes" id="UP000000539">
    <property type="component" value="Chromosome 23"/>
</dbReference>
<dbReference type="Bgee" id="ENSGALG00000000678">
    <property type="expression patterns" value="Expressed in liver and 12 other cell types or tissues"/>
</dbReference>
<dbReference type="GO" id="GO:0005737">
    <property type="term" value="C:cytoplasm"/>
    <property type="evidence" value="ECO:0007669"/>
    <property type="project" value="Ensembl"/>
</dbReference>
<dbReference type="GO" id="GO:0005634">
    <property type="term" value="C:nucleus"/>
    <property type="evidence" value="ECO:0000318"/>
    <property type="project" value="GO_Central"/>
</dbReference>
<dbReference type="GO" id="GO:0003713">
    <property type="term" value="F:transcription coactivator activity"/>
    <property type="evidence" value="ECO:0000314"/>
    <property type="project" value="UniProtKB"/>
</dbReference>
<dbReference type="GO" id="GO:0043627">
    <property type="term" value="P:response to estrogen"/>
    <property type="evidence" value="ECO:0000314"/>
    <property type="project" value="UniProtKB"/>
</dbReference>
<dbReference type="FunFam" id="6.10.140.2200:FF:000001">
    <property type="entry name" value="Cbp/p300-interacting transactivator 2 isoform 1"/>
    <property type="match status" value="1"/>
</dbReference>
<dbReference type="Gene3D" id="6.10.140.2200">
    <property type="match status" value="1"/>
</dbReference>
<dbReference type="InterPro" id="IPR007576">
    <property type="entry name" value="CITED"/>
</dbReference>
<dbReference type="PANTHER" id="PTHR17045:SF5">
    <property type="entry name" value="CBP_P300-INTERACTING TRANSACTIVATOR 4"/>
    <property type="match status" value="1"/>
</dbReference>
<dbReference type="PANTHER" id="PTHR17045">
    <property type="entry name" value="MELANOCYTE SPECIFIC GENE RELATED CITED"/>
    <property type="match status" value="1"/>
</dbReference>
<dbReference type="Pfam" id="PF04487">
    <property type="entry name" value="CITED"/>
    <property type="match status" value="1"/>
</dbReference>
<name>CITE3_CHICK</name>
<proteinExistence type="evidence at transcript level"/>
<evidence type="ECO:0000269" key="1">
    <source>
    </source>
</evidence>
<evidence type="ECO:0000269" key="2">
    <source>
    </source>
</evidence>
<evidence type="ECO:0000305" key="3"/>
<keyword id="KW-0010">Activator</keyword>
<keyword id="KW-0539">Nucleus</keyword>
<keyword id="KW-1185">Reference proteome</keyword>
<keyword id="KW-0804">Transcription</keyword>
<keyword id="KW-0805">Transcription regulation</keyword>
<gene>
    <name type="primary">CITED3</name>
</gene>
<protein>
    <recommendedName>
        <fullName>Cbp/p300-interacting transactivator 3</fullName>
        <shortName>cCITED3</shortName>
    </recommendedName>
</protein>
<accession>Q9I8K7</accession>
<comment type="function">
    <text evidence="2">Acts as a transcriptional coactivator. Enhances estrogen-dependent transactivation mediated by estrogen receptors.</text>
</comment>
<comment type="subcellular location">
    <subcellularLocation>
        <location evidence="3">Nucleus</location>
    </subcellularLocation>
</comment>
<comment type="developmental stage">
    <text evidence="1">Expressed in the pre-somitic mesoderm, mesonephric tubules, Wolfan ducts and collecting tubules of the developing urogenital system. Also expressed in the cranial sensory ganglia, pineal gland and eye.</text>
</comment>
<comment type="similarity">
    <text evidence="3">Belongs to the CITED family.</text>
</comment>
<sequence length="205" mass="22335">MAEHMMMSMSHGGTGLQSYRMGVSGLQGPPQHGQHVLRTLPAAGQMMPYGGAGMDGAMRPRPNLSGQMSHHQMQNAMMFNGPSQQQQQYMGPVGTQQLMASMHLQKLNTQYQGHPLGMSNGPMGAGAQQYRVGPSQHPGMQHMPSPALTLNVMDTDLIDEEVLTSLVLELGLDRIQELPELFLGQNEFDFISDFVSKQQPSAISC</sequence>